<dbReference type="EMBL" id="CP000254">
    <property type="protein sequence ID" value="ABD39866.1"/>
    <property type="molecule type" value="Genomic_DNA"/>
</dbReference>
<dbReference type="RefSeq" id="WP_011447162.1">
    <property type="nucleotide sequence ID" value="NC_007796.1"/>
</dbReference>
<dbReference type="SMR" id="Q2FLD3"/>
<dbReference type="FunCoup" id="Q2FLD3">
    <property type="interactions" value="127"/>
</dbReference>
<dbReference type="STRING" id="323259.Mhun_0088"/>
<dbReference type="EnsemblBacteria" id="ABD39866">
    <property type="protein sequence ID" value="ABD39866"/>
    <property type="gene ID" value="Mhun_0088"/>
</dbReference>
<dbReference type="GeneID" id="3922106"/>
<dbReference type="KEGG" id="mhu:Mhun_0088"/>
<dbReference type="eggNOG" id="arCOG04113">
    <property type="taxonomic scope" value="Archaea"/>
</dbReference>
<dbReference type="HOGENOM" id="CLU_084051_0_2_2"/>
<dbReference type="InParanoid" id="Q2FLD3"/>
<dbReference type="OrthoDB" id="30538at2157"/>
<dbReference type="Proteomes" id="UP000001941">
    <property type="component" value="Chromosome"/>
</dbReference>
<dbReference type="GO" id="GO:1990904">
    <property type="term" value="C:ribonucleoprotein complex"/>
    <property type="evidence" value="ECO:0007669"/>
    <property type="project" value="UniProtKB-KW"/>
</dbReference>
<dbReference type="GO" id="GO:0005840">
    <property type="term" value="C:ribosome"/>
    <property type="evidence" value="ECO:0007669"/>
    <property type="project" value="UniProtKB-KW"/>
</dbReference>
<dbReference type="GO" id="GO:0003735">
    <property type="term" value="F:structural constituent of ribosome"/>
    <property type="evidence" value="ECO:0007669"/>
    <property type="project" value="InterPro"/>
</dbReference>
<dbReference type="GO" id="GO:0006412">
    <property type="term" value="P:translation"/>
    <property type="evidence" value="ECO:0007669"/>
    <property type="project" value="UniProtKB-UniRule"/>
</dbReference>
<dbReference type="CDD" id="cd01433">
    <property type="entry name" value="Ribosomal_L16_L10e"/>
    <property type="match status" value="1"/>
</dbReference>
<dbReference type="Gene3D" id="3.90.1170.10">
    <property type="entry name" value="Ribosomal protein L10e/L16"/>
    <property type="match status" value="1"/>
</dbReference>
<dbReference type="HAMAP" id="MF_00448">
    <property type="entry name" value="Ribosomal_uL16_arch"/>
    <property type="match status" value="1"/>
</dbReference>
<dbReference type="InterPro" id="IPR047873">
    <property type="entry name" value="Ribosomal_uL16"/>
</dbReference>
<dbReference type="InterPro" id="IPR022981">
    <property type="entry name" value="Ribosomal_uL16_arc"/>
</dbReference>
<dbReference type="InterPro" id="IPR016180">
    <property type="entry name" value="Ribosomal_uL16_dom"/>
</dbReference>
<dbReference type="InterPro" id="IPR001197">
    <property type="entry name" value="Ribosomal_uL16_euk_arch"/>
</dbReference>
<dbReference type="InterPro" id="IPR036920">
    <property type="entry name" value="Ribosomal_uL16_sf"/>
</dbReference>
<dbReference type="NCBIfam" id="NF003238">
    <property type="entry name" value="PRK04199.1-3"/>
    <property type="match status" value="1"/>
</dbReference>
<dbReference type="NCBIfam" id="NF003239">
    <property type="entry name" value="PRK04199.1-4"/>
    <property type="match status" value="1"/>
</dbReference>
<dbReference type="NCBIfam" id="TIGR00279">
    <property type="entry name" value="uL16_euk_arch"/>
    <property type="match status" value="1"/>
</dbReference>
<dbReference type="PANTHER" id="PTHR11726">
    <property type="entry name" value="60S RIBOSOMAL PROTEIN L10"/>
    <property type="match status" value="1"/>
</dbReference>
<dbReference type="Pfam" id="PF00252">
    <property type="entry name" value="Ribosomal_L16"/>
    <property type="match status" value="1"/>
</dbReference>
<dbReference type="PIRSF" id="PIRSF005590">
    <property type="entry name" value="Ribosomal_L10"/>
    <property type="match status" value="1"/>
</dbReference>
<dbReference type="SUPFAM" id="SSF54686">
    <property type="entry name" value="Ribosomal protein L16p/L10e"/>
    <property type="match status" value="1"/>
</dbReference>
<reference key="1">
    <citation type="journal article" date="2016" name="Stand. Genomic Sci.">
        <title>Complete genome sequence of Methanospirillum hungatei type strain JF1.</title>
        <authorList>
            <person name="Gunsalus R.P."/>
            <person name="Cook L.E."/>
            <person name="Crable B."/>
            <person name="Rohlin L."/>
            <person name="McDonald E."/>
            <person name="Mouttaki H."/>
            <person name="Sieber J.R."/>
            <person name="Poweleit N."/>
            <person name="Zhou H."/>
            <person name="Lapidus A.L."/>
            <person name="Daligault H.E."/>
            <person name="Land M."/>
            <person name="Gilna P."/>
            <person name="Ivanova N."/>
            <person name="Kyrpides N."/>
            <person name="Culley D.E."/>
            <person name="McInerney M.J."/>
        </authorList>
    </citation>
    <scope>NUCLEOTIDE SEQUENCE [LARGE SCALE GENOMIC DNA]</scope>
    <source>
        <strain>ATCC 27890 / DSM 864 / NBRC 100397 / JF-1</strain>
    </source>
</reference>
<sequence length="170" mass="19146">MVRKPNSMYRNLAKKAYTRKEYMGGIPGVKVVHFDMGNLTSEFPMEVSLVVDESCQIRHSALEAARMSINRKLNKELGRMNYHLKLRTYPHHVLRENKQATGAGADRVSQGMRLAFGKAVGTAARCQQNQKIFTVFSNPASVEKIKDALRHGGHKLPSPTHLVIEMKQES</sequence>
<name>RL10E_METHJ</name>
<keyword id="KW-1185">Reference proteome</keyword>
<keyword id="KW-0687">Ribonucleoprotein</keyword>
<keyword id="KW-0689">Ribosomal protein</keyword>
<accession>Q2FLD3</accession>
<comment type="similarity">
    <text evidence="1">Belongs to the universal ribosomal protein uL16 family.</text>
</comment>
<organism>
    <name type="scientific">Methanospirillum hungatei JF-1 (strain ATCC 27890 / DSM 864 / NBRC 100397 / JF-1)</name>
    <dbReference type="NCBI Taxonomy" id="323259"/>
    <lineage>
        <taxon>Archaea</taxon>
        <taxon>Methanobacteriati</taxon>
        <taxon>Methanobacteriota</taxon>
        <taxon>Stenosarchaea group</taxon>
        <taxon>Methanomicrobia</taxon>
        <taxon>Methanomicrobiales</taxon>
        <taxon>Methanospirillaceae</taxon>
        <taxon>Methanospirillum</taxon>
    </lineage>
</organism>
<evidence type="ECO:0000255" key="1">
    <source>
        <dbReference type="HAMAP-Rule" id="MF_00448"/>
    </source>
</evidence>
<evidence type="ECO:0000305" key="2"/>
<proteinExistence type="inferred from homology"/>
<protein>
    <recommendedName>
        <fullName evidence="1">Large ribosomal subunit protein uL16</fullName>
    </recommendedName>
    <alternativeName>
        <fullName evidence="2">50S ribosomal protein L10e</fullName>
    </alternativeName>
</protein>
<gene>
    <name evidence="1" type="primary">rpl10e</name>
    <name type="ordered locus">Mhun_0088</name>
</gene>
<feature type="chain" id="PRO_1000026187" description="Large ribosomal subunit protein uL16">
    <location>
        <begin position="1"/>
        <end position="170"/>
    </location>
</feature>